<dbReference type="EMBL" id="CU329671">
    <property type="protein sequence ID" value="CAB08777.2"/>
    <property type="molecule type" value="Genomic_DNA"/>
</dbReference>
<dbReference type="PIR" id="T40006">
    <property type="entry name" value="T40006"/>
</dbReference>
<dbReference type="RefSeq" id="NP_596356.2">
    <property type="nucleotide sequence ID" value="NM_001022276.2"/>
</dbReference>
<dbReference type="SMR" id="P87152"/>
<dbReference type="BioGRID" id="276936">
    <property type="interactions" value="25"/>
</dbReference>
<dbReference type="FunCoup" id="P87152">
    <property type="interactions" value="27"/>
</dbReference>
<dbReference type="IntAct" id="P87152">
    <property type="interactions" value="2"/>
</dbReference>
<dbReference type="MINT" id="P87152"/>
<dbReference type="STRING" id="284812.P87152"/>
<dbReference type="iPTMnet" id="P87152"/>
<dbReference type="PaxDb" id="4896-SPBC25H2.11c.1"/>
<dbReference type="EnsemblFungi" id="SPBC25H2.11c.1">
    <property type="protein sequence ID" value="SPBC25H2.11c.1:pep"/>
    <property type="gene ID" value="SPBC25H2.11c"/>
</dbReference>
<dbReference type="GeneID" id="2540408"/>
<dbReference type="KEGG" id="spo:2540408"/>
<dbReference type="PomBase" id="SPBC25H2.11c">
    <property type="gene designation" value="spt7"/>
</dbReference>
<dbReference type="VEuPathDB" id="FungiDB:SPBC25H2.11c"/>
<dbReference type="eggNOG" id="KOG1472">
    <property type="taxonomic scope" value="Eukaryota"/>
</dbReference>
<dbReference type="HOGENOM" id="CLU_006198_0_1_1"/>
<dbReference type="InParanoid" id="P87152"/>
<dbReference type="OMA" id="RHICHKI"/>
<dbReference type="PRO" id="PR:P87152"/>
<dbReference type="Proteomes" id="UP000002485">
    <property type="component" value="Chromosome II"/>
</dbReference>
<dbReference type="GO" id="GO:0000785">
    <property type="term" value="C:chromatin"/>
    <property type="evidence" value="ECO:0000314"/>
    <property type="project" value="PomBase"/>
</dbReference>
<dbReference type="GO" id="GO:0005634">
    <property type="term" value="C:nucleus"/>
    <property type="evidence" value="ECO:0007005"/>
    <property type="project" value="PomBase"/>
</dbReference>
<dbReference type="GO" id="GO:0005721">
    <property type="term" value="C:pericentric heterochromatin"/>
    <property type="evidence" value="ECO:0000269"/>
    <property type="project" value="PomBase"/>
</dbReference>
<dbReference type="GO" id="GO:0000124">
    <property type="term" value="C:SAGA complex"/>
    <property type="evidence" value="ECO:0000314"/>
    <property type="project" value="PomBase"/>
</dbReference>
<dbReference type="GO" id="GO:0046982">
    <property type="term" value="F:protein heterodimerization activity"/>
    <property type="evidence" value="ECO:0007669"/>
    <property type="project" value="InterPro"/>
</dbReference>
<dbReference type="GO" id="GO:0005198">
    <property type="term" value="F:structural molecule activity"/>
    <property type="evidence" value="ECO:0000318"/>
    <property type="project" value="GO_Central"/>
</dbReference>
<dbReference type="GO" id="GO:0045893">
    <property type="term" value="P:positive regulation of DNA-templated transcription"/>
    <property type="evidence" value="ECO:0007669"/>
    <property type="project" value="GOC"/>
</dbReference>
<dbReference type="GO" id="GO:0006357">
    <property type="term" value="P:regulation of transcription by RNA polymerase II"/>
    <property type="evidence" value="ECO:0000269"/>
    <property type="project" value="PomBase"/>
</dbReference>
<dbReference type="GO" id="GO:0045815">
    <property type="term" value="P:transcription initiation-coupled chromatin remodeling"/>
    <property type="evidence" value="ECO:0000305"/>
    <property type="project" value="PomBase"/>
</dbReference>
<dbReference type="CDD" id="cd05510">
    <property type="entry name" value="Bromo_SPT7_like"/>
    <property type="match status" value="1"/>
</dbReference>
<dbReference type="CDD" id="cd22927">
    <property type="entry name" value="HFD_SPT7"/>
    <property type="match status" value="1"/>
</dbReference>
<dbReference type="FunFam" id="1.20.920.10:FF:000032">
    <property type="entry name" value="Transcriptional activator spt7"/>
    <property type="match status" value="1"/>
</dbReference>
<dbReference type="Gene3D" id="1.20.920.10">
    <property type="entry name" value="Bromodomain-like"/>
    <property type="match status" value="1"/>
</dbReference>
<dbReference type="Gene3D" id="1.10.20.10">
    <property type="entry name" value="Histone, subunit A"/>
    <property type="match status" value="1"/>
</dbReference>
<dbReference type="InterPro" id="IPR001487">
    <property type="entry name" value="Bromodomain"/>
</dbReference>
<dbReference type="InterPro" id="IPR036427">
    <property type="entry name" value="Bromodomain-like_sf"/>
</dbReference>
<dbReference type="InterPro" id="IPR018359">
    <property type="entry name" value="Bromodomain_CS"/>
</dbReference>
<dbReference type="InterPro" id="IPR006565">
    <property type="entry name" value="BTP"/>
</dbReference>
<dbReference type="InterPro" id="IPR009072">
    <property type="entry name" value="Histone-fold"/>
</dbReference>
<dbReference type="InterPro" id="IPR037782">
    <property type="entry name" value="Spt7"/>
</dbReference>
<dbReference type="PANTHER" id="PTHR47343">
    <property type="entry name" value="TRANSCRIPTIONAL ACTIVATOR SPT7"/>
    <property type="match status" value="1"/>
</dbReference>
<dbReference type="PANTHER" id="PTHR47343:SF1">
    <property type="entry name" value="TRANSCRIPTIONAL ACTIVATOR SPT7"/>
    <property type="match status" value="1"/>
</dbReference>
<dbReference type="Pfam" id="PF07524">
    <property type="entry name" value="Bromo_TP"/>
    <property type="match status" value="1"/>
</dbReference>
<dbReference type="Pfam" id="PF00439">
    <property type="entry name" value="Bromodomain"/>
    <property type="match status" value="1"/>
</dbReference>
<dbReference type="PRINTS" id="PR00503">
    <property type="entry name" value="BROMODOMAIN"/>
</dbReference>
<dbReference type="SMART" id="SM00297">
    <property type="entry name" value="BROMO"/>
    <property type="match status" value="1"/>
</dbReference>
<dbReference type="SMART" id="SM00576">
    <property type="entry name" value="BTP"/>
    <property type="match status" value="1"/>
</dbReference>
<dbReference type="SUPFAM" id="SSF47370">
    <property type="entry name" value="Bromodomain"/>
    <property type="match status" value="1"/>
</dbReference>
<dbReference type="PROSITE" id="PS00633">
    <property type="entry name" value="BROMODOMAIN_1"/>
    <property type="match status" value="1"/>
</dbReference>
<dbReference type="PROSITE" id="PS50014">
    <property type="entry name" value="BROMODOMAIN_2"/>
    <property type="match status" value="1"/>
</dbReference>
<reference key="1">
    <citation type="journal article" date="2002" name="Nature">
        <title>The genome sequence of Schizosaccharomyces pombe.</title>
        <authorList>
            <person name="Wood V."/>
            <person name="Gwilliam R."/>
            <person name="Rajandream M.A."/>
            <person name="Lyne M.H."/>
            <person name="Lyne R."/>
            <person name="Stewart A."/>
            <person name="Sgouros J.G."/>
            <person name="Peat N."/>
            <person name="Hayles J."/>
            <person name="Baker S.G."/>
            <person name="Basham D."/>
            <person name="Bowman S."/>
            <person name="Brooks K."/>
            <person name="Brown D."/>
            <person name="Brown S."/>
            <person name="Chillingworth T."/>
            <person name="Churcher C.M."/>
            <person name="Collins M."/>
            <person name="Connor R."/>
            <person name="Cronin A."/>
            <person name="Davis P."/>
            <person name="Feltwell T."/>
            <person name="Fraser A."/>
            <person name="Gentles S."/>
            <person name="Goble A."/>
            <person name="Hamlin N."/>
            <person name="Harris D.E."/>
            <person name="Hidalgo J."/>
            <person name="Hodgson G."/>
            <person name="Holroyd S."/>
            <person name="Hornsby T."/>
            <person name="Howarth S."/>
            <person name="Huckle E.J."/>
            <person name="Hunt S."/>
            <person name="Jagels K."/>
            <person name="James K.D."/>
            <person name="Jones L."/>
            <person name="Jones M."/>
            <person name="Leather S."/>
            <person name="McDonald S."/>
            <person name="McLean J."/>
            <person name="Mooney P."/>
            <person name="Moule S."/>
            <person name="Mungall K.L."/>
            <person name="Murphy L.D."/>
            <person name="Niblett D."/>
            <person name="Odell C."/>
            <person name="Oliver K."/>
            <person name="O'Neil S."/>
            <person name="Pearson D."/>
            <person name="Quail M.A."/>
            <person name="Rabbinowitsch E."/>
            <person name="Rutherford K.M."/>
            <person name="Rutter S."/>
            <person name="Saunders D."/>
            <person name="Seeger K."/>
            <person name="Sharp S."/>
            <person name="Skelton J."/>
            <person name="Simmonds M.N."/>
            <person name="Squares R."/>
            <person name="Squares S."/>
            <person name="Stevens K."/>
            <person name="Taylor K."/>
            <person name="Taylor R.G."/>
            <person name="Tivey A."/>
            <person name="Walsh S.V."/>
            <person name="Warren T."/>
            <person name="Whitehead S."/>
            <person name="Woodward J.R."/>
            <person name="Volckaert G."/>
            <person name="Aert R."/>
            <person name="Robben J."/>
            <person name="Grymonprez B."/>
            <person name="Weltjens I."/>
            <person name="Vanstreels E."/>
            <person name="Rieger M."/>
            <person name="Schaefer M."/>
            <person name="Mueller-Auer S."/>
            <person name="Gabel C."/>
            <person name="Fuchs M."/>
            <person name="Duesterhoeft A."/>
            <person name="Fritzc C."/>
            <person name="Holzer E."/>
            <person name="Moestl D."/>
            <person name="Hilbert H."/>
            <person name="Borzym K."/>
            <person name="Langer I."/>
            <person name="Beck A."/>
            <person name="Lehrach H."/>
            <person name="Reinhardt R."/>
            <person name="Pohl T.M."/>
            <person name="Eger P."/>
            <person name="Zimmermann W."/>
            <person name="Wedler H."/>
            <person name="Wambutt R."/>
            <person name="Purnelle B."/>
            <person name="Goffeau A."/>
            <person name="Cadieu E."/>
            <person name="Dreano S."/>
            <person name="Gloux S."/>
            <person name="Lelaure V."/>
            <person name="Mottier S."/>
            <person name="Galibert F."/>
            <person name="Aves S.J."/>
            <person name="Xiang Z."/>
            <person name="Hunt C."/>
            <person name="Moore K."/>
            <person name="Hurst S.M."/>
            <person name="Lucas M."/>
            <person name="Rochet M."/>
            <person name="Gaillardin C."/>
            <person name="Tallada V.A."/>
            <person name="Garzon A."/>
            <person name="Thode G."/>
            <person name="Daga R.R."/>
            <person name="Cruzado L."/>
            <person name="Jimenez J."/>
            <person name="Sanchez M."/>
            <person name="del Rey F."/>
            <person name="Benito J."/>
            <person name="Dominguez A."/>
            <person name="Revuelta J.L."/>
            <person name="Moreno S."/>
            <person name="Armstrong J."/>
            <person name="Forsburg S.L."/>
            <person name="Cerutti L."/>
            <person name="Lowe T."/>
            <person name="McCombie W.R."/>
            <person name="Paulsen I."/>
            <person name="Potashkin J."/>
            <person name="Shpakovski G.V."/>
            <person name="Ussery D."/>
            <person name="Barrell B.G."/>
            <person name="Nurse P."/>
        </authorList>
    </citation>
    <scope>NUCLEOTIDE SEQUENCE [LARGE SCALE GENOMIC DNA]</scope>
    <source>
        <strain>972 / ATCC 24843</strain>
    </source>
</reference>
<reference key="2">
    <citation type="journal article" date="2011" name="Science">
        <title>Comparative functional genomics of the fission yeasts.</title>
        <authorList>
            <person name="Rhind N."/>
            <person name="Chen Z."/>
            <person name="Yassour M."/>
            <person name="Thompson D.A."/>
            <person name="Haas B.J."/>
            <person name="Habib N."/>
            <person name="Wapinski I."/>
            <person name="Roy S."/>
            <person name="Lin M.F."/>
            <person name="Heiman D.I."/>
            <person name="Young S.K."/>
            <person name="Furuya K."/>
            <person name="Guo Y."/>
            <person name="Pidoux A."/>
            <person name="Chen H.M."/>
            <person name="Robbertse B."/>
            <person name="Goldberg J.M."/>
            <person name="Aoki K."/>
            <person name="Bayne E.H."/>
            <person name="Berlin A.M."/>
            <person name="Desjardins C.A."/>
            <person name="Dobbs E."/>
            <person name="Dukaj L."/>
            <person name="Fan L."/>
            <person name="FitzGerald M.G."/>
            <person name="French C."/>
            <person name="Gujja S."/>
            <person name="Hansen K."/>
            <person name="Keifenheim D."/>
            <person name="Levin J.Z."/>
            <person name="Mosher R.A."/>
            <person name="Mueller C.A."/>
            <person name="Pfiffner J."/>
            <person name="Priest M."/>
            <person name="Russ C."/>
            <person name="Smialowska A."/>
            <person name="Swoboda P."/>
            <person name="Sykes S.M."/>
            <person name="Vaughn M."/>
            <person name="Vengrova S."/>
            <person name="Yoder R."/>
            <person name="Zeng Q."/>
            <person name="Allshire R."/>
            <person name="Baulcombe D."/>
            <person name="Birren B.W."/>
            <person name="Brown W."/>
            <person name="Ekwall K."/>
            <person name="Kellis M."/>
            <person name="Leatherwood J."/>
            <person name="Levin H."/>
            <person name="Margalit H."/>
            <person name="Martienssen R."/>
            <person name="Nieduszynski C.A."/>
            <person name="Spatafora J.W."/>
            <person name="Friedman N."/>
            <person name="Dalgaard J.Z."/>
            <person name="Baumann P."/>
            <person name="Niki H."/>
            <person name="Regev A."/>
            <person name="Nusbaum C."/>
        </authorList>
    </citation>
    <scope>REVISION OF GENE MODEL</scope>
</reference>
<reference key="3">
    <citation type="journal article" date="2006" name="Nat. Biotechnol.">
        <title>ORFeome cloning and global analysis of protein localization in the fission yeast Schizosaccharomyces pombe.</title>
        <authorList>
            <person name="Matsuyama A."/>
            <person name="Arai R."/>
            <person name="Yashiroda Y."/>
            <person name="Shirai A."/>
            <person name="Kamata A."/>
            <person name="Sekido S."/>
            <person name="Kobayashi Y."/>
            <person name="Hashimoto A."/>
            <person name="Hamamoto M."/>
            <person name="Hiraoka Y."/>
            <person name="Horinouchi S."/>
            <person name="Yoshida M."/>
        </authorList>
    </citation>
    <scope>SUBCELLULAR LOCATION [LARGE SCALE ANALYSIS]</scope>
</reference>
<reference key="4">
    <citation type="journal article" date="2008" name="Genes Dev.">
        <title>The S. pombe SAGA complex controls the switch from proliferation to sexual differentiation through the opposing roles of its subunits Gcn5 and Spt8.</title>
        <authorList>
            <person name="Helmlinger D."/>
            <person name="Marguerat S."/>
            <person name="Villen J."/>
            <person name="Gygi S.P."/>
            <person name="Bahler J."/>
            <person name="Winston F."/>
        </authorList>
    </citation>
    <scope>IDENTIFICATION IN THE SAGA COMPLEX</scope>
    <scope>IDENTIFICATION BY MASS SPECTROMETRY</scope>
</reference>
<reference key="5">
    <citation type="journal article" date="2008" name="J. Proteome Res.">
        <title>Phosphoproteome analysis of fission yeast.</title>
        <authorList>
            <person name="Wilson-Grady J.T."/>
            <person name="Villen J."/>
            <person name="Gygi S.P."/>
        </authorList>
    </citation>
    <scope>PHOSPHORYLATION [LARGE SCALE ANALYSIS] AT SER-475</scope>
    <scope>IDENTIFICATION BY MASS SPECTROMETRY</scope>
</reference>
<reference key="6">
    <citation type="journal article" date="2011" name="Genetics">
        <title>Augmented annotation of the Schizosaccharomyces pombe genome reveals additional genes required for growth and viability.</title>
        <authorList>
            <person name="Bitton D.A."/>
            <person name="Wood V."/>
            <person name="Scutt P.J."/>
            <person name="Grallert A."/>
            <person name="Yates T."/>
            <person name="Smith D.L."/>
            <person name="Hagan I.M."/>
            <person name="Miller C.J."/>
        </authorList>
    </citation>
    <scope>REVISION OF GENE MODEL</scope>
    <scope>IDENTIFICATION BY MASS SPECTROMETRY</scope>
</reference>
<evidence type="ECO:0000250" key="1">
    <source>
        <dbReference type="UniProtKB" id="P35177"/>
    </source>
</evidence>
<evidence type="ECO:0000255" key="2">
    <source>
        <dbReference type="PROSITE-ProRule" id="PRU00035"/>
    </source>
</evidence>
<evidence type="ECO:0000256" key="3">
    <source>
        <dbReference type="SAM" id="MobiDB-lite"/>
    </source>
</evidence>
<evidence type="ECO:0000269" key="4">
    <source>
    </source>
</evidence>
<evidence type="ECO:0000269" key="5">
    <source>
    </source>
</evidence>
<evidence type="ECO:0000269" key="6">
    <source>
    </source>
</evidence>
<name>SPT7_SCHPO</name>
<organism>
    <name type="scientific">Schizosaccharomyces pombe (strain 972 / ATCC 24843)</name>
    <name type="common">Fission yeast</name>
    <dbReference type="NCBI Taxonomy" id="284812"/>
    <lineage>
        <taxon>Eukaryota</taxon>
        <taxon>Fungi</taxon>
        <taxon>Dikarya</taxon>
        <taxon>Ascomycota</taxon>
        <taxon>Taphrinomycotina</taxon>
        <taxon>Schizosaccharomycetes</taxon>
        <taxon>Schizosaccharomycetales</taxon>
        <taxon>Schizosaccharomycetaceae</taxon>
        <taxon>Schizosaccharomyces</taxon>
    </lineage>
</organism>
<comment type="function">
    <text evidence="1">Essential scaffold subunit of the transcription coactivator SAGA complex. SAGA acts as a general cofactor required for essentially all RNA polymerase II transcription. At the promoters, SAGA is required for transcription pre-initiation complex (PIC) recruitment. It influences RNA polymerase II transcriptional activity through different activities such as TBP interaction (via core/TAF module) and promoter selectivity, interaction with transcription activators (via Tra1/SPT module), and chromatin modification through histone acetylation (via HAT module) and deubiquitination (via DUB module). SAGA preferentially acetylates histones H3 (to form H3K9ac, H3K14ac, H3K18ac and H3K23ac) and H2B and deubiquitinates histone H2B. SAGA interacts with DNA via upstream activating sequences (UASs).</text>
</comment>
<comment type="subunit">
    <text evidence="1 6">Component of the 1.8 MDa SAGA (Spt-Ada-Gcn5 acetyltransferase) complex, which is composed of 19 subunits tra1, spt7, taf5, ngg1/ada3, sgf73, spt20, spt8, taf12, taf6, hfi1/ada1, ubp8, gcn5, ada2, spt3, sgf29, taf10, taf9, sgf11 and sus1 (PubMed:19056896). The SAGA complex is composed of 4 modules, namely the HAT (histone acetyltransferase) module (gcn5, ada2, ngg1/ada3 and sgf29), the DUB (deubiquitinating) module (ubp8, sgf11, sgf73 and sus1), the core or TAF (TBP-associated factor) module (taf5, taf6, taf9, taf10 and taf12), and the Tra1 or SPT (Suppressor of Ty) module (tra1, hfi1/ada1, spt3, spt7, spt8 and spt20). The Tra1/SPT module binds activators, the core module recruits TBP (TATA-binding protein), the HAT module contains the histone H3 acetyltransferase gcn5, and the DUB module comprises the histone H2B deubiquitinase ubp8 (By similarity).</text>
</comment>
<comment type="subcellular location">
    <subcellularLocation>
        <location evidence="4">Nucleus</location>
    </subcellularLocation>
</comment>
<feature type="chain" id="PRO_0000310328" description="SAGA complex subunit Spt7">
    <location>
        <begin position="1"/>
        <end position="992"/>
    </location>
</feature>
<feature type="domain" description="Bromo" evidence="2">
    <location>
        <begin position="311"/>
        <end position="417"/>
    </location>
</feature>
<feature type="region of interest" description="Disordered" evidence="3">
    <location>
        <begin position="124"/>
        <end position="162"/>
    </location>
</feature>
<feature type="region of interest" description="Disordered" evidence="3">
    <location>
        <begin position="230"/>
        <end position="249"/>
    </location>
</feature>
<feature type="region of interest" description="Disordered" evidence="3">
    <location>
        <begin position="436"/>
        <end position="502"/>
    </location>
</feature>
<feature type="region of interest" description="Disordered" evidence="3">
    <location>
        <begin position="934"/>
        <end position="956"/>
    </location>
</feature>
<feature type="compositionally biased region" description="Basic and acidic residues" evidence="3">
    <location>
        <begin position="130"/>
        <end position="142"/>
    </location>
</feature>
<feature type="compositionally biased region" description="Acidic residues" evidence="3">
    <location>
        <begin position="149"/>
        <end position="159"/>
    </location>
</feature>
<feature type="compositionally biased region" description="Polar residues" evidence="3">
    <location>
        <begin position="459"/>
        <end position="483"/>
    </location>
</feature>
<feature type="modified residue" description="Phosphoserine" evidence="5">
    <location>
        <position position="475"/>
    </location>
</feature>
<protein>
    <recommendedName>
        <fullName>SAGA complex subunit Spt7</fullName>
    </recommendedName>
    <alternativeName>
        <fullName>Transcriptional activator spt7</fullName>
    </alternativeName>
</protein>
<proteinExistence type="evidence at protein level"/>
<accession>P87152</accession>
<keyword id="KW-0103">Bromodomain</keyword>
<keyword id="KW-0539">Nucleus</keyword>
<keyword id="KW-0597">Phosphoprotein</keyword>
<keyword id="KW-1185">Reference proteome</keyword>
<keyword id="KW-0804">Transcription</keyword>
<keyword id="KW-0805">Transcription regulation</keyword>
<sequence length="992" mass="112901">METNFEDSKSLDEPVLHDIAIALLKNDYWSLYLSPEQKRKYISILNDTLLWNRFINVIEWDKLCDEKDSNGSNDDEEDDLDITTLFRCRCMIFDAKINPALFDLSSTSSGSIEHVDHQNISLEASLAEEEERKKGDAKKSEATGRQLFDDDDFDESDAEDSSKATITLDLQKDKSLRKSIIDLKSVDIDDMDTSGFAAIESNKALSNISFNYVYYTLENDSENINEVKKFEDEEDTSTPNTSSFQNNSSSLDLSDNLSLNSKFGSLTSSFKYLLQYLEGNRSKINATDADVKQLLSDVKKNKSKWANDQRIGQEELYEAAEKVVLELRSYTEHSLAFLTKVSKRDAPDYYTVIKEPMDLGTILRNLKNLHYNSKKEFVHDLMLIWSNCFLYNSHPDHPLRVHAQFMKDKSLELINLIPDIVIQSRKDYDDSLIEAELESDEESTAETSKHVTSKKTSSRGGQTQQAVEVHTDANSPEENNTPVTKKEVETSKPPAVSGSTPPVNEAAVIESSNTLEKEPLSDVATEYWKIKTKDIRESHILNNRRILKSLQFIETELPMIRKPTAMSAFIDREVAYGSIDCLPMDKGDFEPIMKLDTTPLLEYDVGSGVPMTAGSVLETESEEDLYFRDYSLFEINRNTPGVPSLMYKNIAKMQEIRKLCNKIQTVRQLQLPQPFYYEHHKSHVPFANNEPILLDIPQNYDNMSSFKPLAHDVLKKLCTIILFHAGFESFQMGALDALTEIAADYMAKMGAVMDQYLIYGKDKSQQEIVGQTLGELGVDDVNDLISYVYHDVERQSVKLLEIHQRLQRHFVELLRPALSERNDEEAIFNQNGESFVTGNFSYETGDDFFGLRELGLDRELGLDSLSVPLHLLQSRLRSNMSWQPEATIKGDQEYAPPPKYPPITAESISNEIGLIQGFLKKNLEEFGLDELLEDEDIRPRSKPPRPRLPPNGKITTGRKRIASSVFLNQSLRKKRCLKENEQGTEVTTLPEE</sequence>
<gene>
    <name type="primary">spt7</name>
    <name type="ORF">SPBC25H2.11c</name>
</gene>